<name>NUON_PECCP</name>
<accession>C6DA34</accession>
<comment type="function">
    <text evidence="1">NDH-1 shuttles electrons from NADH, via FMN and iron-sulfur (Fe-S) centers, to quinones in the respiratory chain. The immediate electron acceptor for the enzyme in this species is believed to be ubiquinone. Couples the redox reaction to proton translocation (for every two electrons transferred, four hydrogen ions are translocated across the cytoplasmic membrane), and thus conserves the redox energy in a proton gradient.</text>
</comment>
<comment type="catalytic activity">
    <reaction evidence="1">
        <text>a quinone + NADH + 5 H(+)(in) = a quinol + NAD(+) + 4 H(+)(out)</text>
        <dbReference type="Rhea" id="RHEA:57888"/>
        <dbReference type="ChEBI" id="CHEBI:15378"/>
        <dbReference type="ChEBI" id="CHEBI:24646"/>
        <dbReference type="ChEBI" id="CHEBI:57540"/>
        <dbReference type="ChEBI" id="CHEBI:57945"/>
        <dbReference type="ChEBI" id="CHEBI:132124"/>
    </reaction>
</comment>
<comment type="subunit">
    <text evidence="1">NDH-1 is composed of 13 different subunits. Subunits NuoA, H, J, K, L, M, N constitute the membrane sector of the complex.</text>
</comment>
<comment type="subcellular location">
    <subcellularLocation>
        <location evidence="1">Cell inner membrane</location>
        <topology evidence="1">Multi-pass membrane protein</topology>
    </subcellularLocation>
</comment>
<comment type="similarity">
    <text evidence="1">Belongs to the complex I subunit 2 family.</text>
</comment>
<keyword id="KW-0997">Cell inner membrane</keyword>
<keyword id="KW-1003">Cell membrane</keyword>
<keyword id="KW-0472">Membrane</keyword>
<keyword id="KW-0520">NAD</keyword>
<keyword id="KW-0874">Quinone</keyword>
<keyword id="KW-1278">Translocase</keyword>
<keyword id="KW-0812">Transmembrane</keyword>
<keyword id="KW-1133">Transmembrane helix</keyword>
<keyword id="KW-0813">Transport</keyword>
<keyword id="KW-0830">Ubiquinone</keyword>
<gene>
    <name evidence="1" type="primary">nuoN</name>
    <name type="ordered locus">PC1_2760</name>
</gene>
<proteinExistence type="inferred from homology"/>
<reference key="1">
    <citation type="submission" date="2009-07" db="EMBL/GenBank/DDBJ databases">
        <title>Complete sequence of Pectobacterium carotovorum subsp. carotovorum PC1.</title>
        <authorList>
            <consortium name="US DOE Joint Genome Institute"/>
            <person name="Lucas S."/>
            <person name="Copeland A."/>
            <person name="Lapidus A."/>
            <person name="Glavina del Rio T."/>
            <person name="Tice H."/>
            <person name="Bruce D."/>
            <person name="Goodwin L."/>
            <person name="Pitluck S."/>
            <person name="Munk A.C."/>
            <person name="Brettin T."/>
            <person name="Detter J.C."/>
            <person name="Han C."/>
            <person name="Tapia R."/>
            <person name="Larimer F."/>
            <person name="Land M."/>
            <person name="Hauser L."/>
            <person name="Kyrpides N."/>
            <person name="Mikhailova N."/>
            <person name="Balakrishnan V."/>
            <person name="Glasner J."/>
            <person name="Perna N.T."/>
        </authorList>
    </citation>
    <scope>NUCLEOTIDE SEQUENCE [LARGE SCALE GENOMIC DNA]</scope>
    <source>
        <strain>PC1</strain>
    </source>
</reference>
<evidence type="ECO:0000255" key="1">
    <source>
        <dbReference type="HAMAP-Rule" id="MF_00445"/>
    </source>
</evidence>
<dbReference type="EC" id="7.1.1.-" evidence="1"/>
<dbReference type="EMBL" id="CP001657">
    <property type="protein sequence ID" value="ACT13790.1"/>
    <property type="molecule type" value="Genomic_DNA"/>
</dbReference>
<dbReference type="RefSeq" id="WP_015840957.1">
    <property type="nucleotide sequence ID" value="NC_012917.1"/>
</dbReference>
<dbReference type="SMR" id="C6DA34"/>
<dbReference type="STRING" id="561230.PC1_2760"/>
<dbReference type="KEGG" id="pct:PC1_2760"/>
<dbReference type="eggNOG" id="COG1007">
    <property type="taxonomic scope" value="Bacteria"/>
</dbReference>
<dbReference type="HOGENOM" id="CLU_007100_1_5_6"/>
<dbReference type="OrthoDB" id="9768329at2"/>
<dbReference type="Proteomes" id="UP000002736">
    <property type="component" value="Chromosome"/>
</dbReference>
<dbReference type="GO" id="GO:0005886">
    <property type="term" value="C:plasma membrane"/>
    <property type="evidence" value="ECO:0007669"/>
    <property type="project" value="UniProtKB-SubCell"/>
</dbReference>
<dbReference type="GO" id="GO:0008137">
    <property type="term" value="F:NADH dehydrogenase (ubiquinone) activity"/>
    <property type="evidence" value="ECO:0007669"/>
    <property type="project" value="InterPro"/>
</dbReference>
<dbReference type="GO" id="GO:0050136">
    <property type="term" value="F:NADH:ubiquinone reductase (non-electrogenic) activity"/>
    <property type="evidence" value="ECO:0007669"/>
    <property type="project" value="UniProtKB-UniRule"/>
</dbReference>
<dbReference type="GO" id="GO:0048038">
    <property type="term" value="F:quinone binding"/>
    <property type="evidence" value="ECO:0007669"/>
    <property type="project" value="UniProtKB-KW"/>
</dbReference>
<dbReference type="GO" id="GO:0042773">
    <property type="term" value="P:ATP synthesis coupled electron transport"/>
    <property type="evidence" value="ECO:0007669"/>
    <property type="project" value="InterPro"/>
</dbReference>
<dbReference type="HAMAP" id="MF_00445">
    <property type="entry name" value="NDH1_NuoN_1"/>
    <property type="match status" value="1"/>
</dbReference>
<dbReference type="InterPro" id="IPR010096">
    <property type="entry name" value="NADH-Q_OxRdtase_suN/2"/>
</dbReference>
<dbReference type="InterPro" id="IPR001750">
    <property type="entry name" value="ND/Mrp_TM"/>
</dbReference>
<dbReference type="NCBIfam" id="TIGR01770">
    <property type="entry name" value="NDH_I_N"/>
    <property type="match status" value="1"/>
</dbReference>
<dbReference type="NCBIfam" id="NF004439">
    <property type="entry name" value="PRK05777.1-1"/>
    <property type="match status" value="1"/>
</dbReference>
<dbReference type="PANTHER" id="PTHR22773">
    <property type="entry name" value="NADH DEHYDROGENASE"/>
    <property type="match status" value="1"/>
</dbReference>
<dbReference type="Pfam" id="PF00361">
    <property type="entry name" value="Proton_antipo_M"/>
    <property type="match status" value="1"/>
</dbReference>
<sequence>MTITLQQLIALSPLLIVGLTVVVVMLCIAWRRNHFVNATMTVIGLNIALLSLYFVGQAGPTDVTPLLRVDGLSMFYTGLVLLASLATSTFAYPWLQGYPDNRDEFYLLVLIAALGGILLSSANHLASLFIGIELLSLPLFGLVGYAFRQKRSLEASIKYMLLSAAASSFLLFGMALIYAESGDMSFASLGKSLSDHQIHEPLLLAGLGMMIVGLGFKLSLVPFQLWTPDVYQGAPAPVSTFLATAGKIAVFGAVMRLFLYAPMADSESVRIVLGVIAFASILFGNVMAVSQTNIKRLLGYSSIAHLGYLLVALIAVQSHQLALETVGVYLVGYLFSSLGAFGVVSLMSSPYRGPDADSLFSYRGLFWHKPILSAVMTVMMLSLAGIPMTLGFFGKFYVLAVGVNAELWWLTGAVVLGSAIGLYYYLRVMVSLYLTAPQQLQRDTPNNWALTAGGVVVLISSIAVLFFGLYPQPLISLVQLAQPML</sequence>
<protein>
    <recommendedName>
        <fullName evidence="1">NADH-quinone oxidoreductase subunit N</fullName>
        <ecNumber evidence="1">7.1.1.-</ecNumber>
    </recommendedName>
    <alternativeName>
        <fullName evidence="1">NADH dehydrogenase I subunit N</fullName>
    </alternativeName>
    <alternativeName>
        <fullName evidence="1">NDH-1 subunit N</fullName>
    </alternativeName>
</protein>
<organism>
    <name type="scientific">Pectobacterium carotovorum subsp. carotovorum (strain PC1)</name>
    <dbReference type="NCBI Taxonomy" id="561230"/>
    <lineage>
        <taxon>Bacteria</taxon>
        <taxon>Pseudomonadati</taxon>
        <taxon>Pseudomonadota</taxon>
        <taxon>Gammaproteobacteria</taxon>
        <taxon>Enterobacterales</taxon>
        <taxon>Pectobacteriaceae</taxon>
        <taxon>Pectobacterium</taxon>
    </lineage>
</organism>
<feature type="chain" id="PRO_1000215283" description="NADH-quinone oxidoreductase subunit N">
    <location>
        <begin position="1"/>
        <end position="485"/>
    </location>
</feature>
<feature type="transmembrane region" description="Helical" evidence="1">
    <location>
        <begin position="8"/>
        <end position="28"/>
    </location>
</feature>
<feature type="transmembrane region" description="Helical" evidence="1">
    <location>
        <begin position="35"/>
        <end position="55"/>
    </location>
</feature>
<feature type="transmembrane region" description="Helical" evidence="1">
    <location>
        <begin position="75"/>
        <end position="95"/>
    </location>
</feature>
<feature type="transmembrane region" description="Helical" evidence="1">
    <location>
        <begin position="105"/>
        <end position="125"/>
    </location>
</feature>
<feature type="transmembrane region" description="Helical" evidence="1">
    <location>
        <begin position="127"/>
        <end position="147"/>
    </location>
</feature>
<feature type="transmembrane region" description="Helical" evidence="1">
    <location>
        <begin position="159"/>
        <end position="179"/>
    </location>
</feature>
<feature type="transmembrane region" description="Helical" evidence="1">
    <location>
        <begin position="203"/>
        <end position="223"/>
    </location>
</feature>
<feature type="transmembrane region" description="Helical" evidence="1">
    <location>
        <begin position="235"/>
        <end position="255"/>
    </location>
</feature>
<feature type="transmembrane region" description="Helical" evidence="1">
    <location>
        <begin position="271"/>
        <end position="291"/>
    </location>
</feature>
<feature type="transmembrane region" description="Helical" evidence="1">
    <location>
        <begin position="297"/>
        <end position="317"/>
    </location>
</feature>
<feature type="transmembrane region" description="Helical" evidence="1">
    <location>
        <begin position="326"/>
        <end position="346"/>
    </location>
</feature>
<feature type="transmembrane region" description="Helical" evidence="1">
    <location>
        <begin position="374"/>
        <end position="394"/>
    </location>
</feature>
<feature type="transmembrane region" description="Helical" evidence="1">
    <location>
        <begin position="407"/>
        <end position="426"/>
    </location>
</feature>
<feature type="transmembrane region" description="Helical" evidence="1">
    <location>
        <begin position="449"/>
        <end position="469"/>
    </location>
</feature>